<gene>
    <name evidence="1" type="primary">luxS</name>
    <name type="ordered locus">APP7_1267</name>
</gene>
<dbReference type="EC" id="4.4.1.21" evidence="1"/>
<dbReference type="EMBL" id="CP001091">
    <property type="protein sequence ID" value="ACE61919.1"/>
    <property type="molecule type" value="Genomic_DNA"/>
</dbReference>
<dbReference type="RefSeq" id="WP_005598178.1">
    <property type="nucleotide sequence ID" value="NC_010939.1"/>
</dbReference>
<dbReference type="SMR" id="B3H1Y9"/>
<dbReference type="GeneID" id="48599454"/>
<dbReference type="KEGG" id="apa:APP7_1267"/>
<dbReference type="HOGENOM" id="CLU_107531_2_0_6"/>
<dbReference type="Proteomes" id="UP000001226">
    <property type="component" value="Chromosome"/>
</dbReference>
<dbReference type="GO" id="GO:0005506">
    <property type="term" value="F:iron ion binding"/>
    <property type="evidence" value="ECO:0007669"/>
    <property type="project" value="InterPro"/>
</dbReference>
<dbReference type="GO" id="GO:0043768">
    <property type="term" value="F:S-ribosylhomocysteine lyase activity"/>
    <property type="evidence" value="ECO:0007669"/>
    <property type="project" value="UniProtKB-UniRule"/>
</dbReference>
<dbReference type="GO" id="GO:0009372">
    <property type="term" value="P:quorum sensing"/>
    <property type="evidence" value="ECO:0007669"/>
    <property type="project" value="UniProtKB-UniRule"/>
</dbReference>
<dbReference type="Gene3D" id="3.30.1360.80">
    <property type="entry name" value="S-ribosylhomocysteinase (LuxS)"/>
    <property type="match status" value="1"/>
</dbReference>
<dbReference type="HAMAP" id="MF_00091">
    <property type="entry name" value="LuxS"/>
    <property type="match status" value="1"/>
</dbReference>
<dbReference type="InterPro" id="IPR037005">
    <property type="entry name" value="LuxS_sf"/>
</dbReference>
<dbReference type="InterPro" id="IPR011249">
    <property type="entry name" value="Metalloenz_LuxS/M16"/>
</dbReference>
<dbReference type="InterPro" id="IPR003815">
    <property type="entry name" value="S-ribosylhomocysteinase"/>
</dbReference>
<dbReference type="NCBIfam" id="NF002602">
    <property type="entry name" value="PRK02260.1-2"/>
    <property type="match status" value="1"/>
</dbReference>
<dbReference type="PANTHER" id="PTHR35799">
    <property type="entry name" value="S-RIBOSYLHOMOCYSTEINE LYASE"/>
    <property type="match status" value="1"/>
</dbReference>
<dbReference type="PANTHER" id="PTHR35799:SF1">
    <property type="entry name" value="S-RIBOSYLHOMOCYSTEINE LYASE"/>
    <property type="match status" value="1"/>
</dbReference>
<dbReference type="Pfam" id="PF02664">
    <property type="entry name" value="LuxS"/>
    <property type="match status" value="1"/>
</dbReference>
<dbReference type="PIRSF" id="PIRSF006160">
    <property type="entry name" value="AI2"/>
    <property type="match status" value="1"/>
</dbReference>
<dbReference type="PRINTS" id="PR01487">
    <property type="entry name" value="LUXSPROTEIN"/>
</dbReference>
<dbReference type="SUPFAM" id="SSF63411">
    <property type="entry name" value="LuxS/MPP-like metallohydrolase"/>
    <property type="match status" value="1"/>
</dbReference>
<feature type="chain" id="PRO_1000093298" description="S-ribosylhomocysteine lyase">
    <location>
        <begin position="1"/>
        <end position="169"/>
    </location>
</feature>
<feature type="binding site" evidence="1">
    <location>
        <position position="54"/>
    </location>
    <ligand>
        <name>Fe cation</name>
        <dbReference type="ChEBI" id="CHEBI:24875"/>
    </ligand>
</feature>
<feature type="binding site" evidence="1">
    <location>
        <position position="58"/>
    </location>
    <ligand>
        <name>Fe cation</name>
        <dbReference type="ChEBI" id="CHEBI:24875"/>
    </ligand>
</feature>
<feature type="binding site" evidence="1">
    <location>
        <position position="129"/>
    </location>
    <ligand>
        <name>Fe cation</name>
        <dbReference type="ChEBI" id="CHEBI:24875"/>
    </ligand>
</feature>
<name>LUXS_ACTP7</name>
<keyword id="KW-0071">Autoinducer synthesis</keyword>
<keyword id="KW-0408">Iron</keyword>
<keyword id="KW-0456">Lyase</keyword>
<keyword id="KW-0479">Metal-binding</keyword>
<keyword id="KW-0673">Quorum sensing</keyword>
<evidence type="ECO:0000255" key="1">
    <source>
        <dbReference type="HAMAP-Rule" id="MF_00091"/>
    </source>
</evidence>
<protein>
    <recommendedName>
        <fullName evidence="1">S-ribosylhomocysteine lyase</fullName>
        <ecNumber evidence="1">4.4.1.21</ecNumber>
    </recommendedName>
    <alternativeName>
        <fullName evidence="1">AI-2 synthesis protein</fullName>
    </alternativeName>
    <alternativeName>
        <fullName evidence="1">Autoinducer-2 production protein LuxS</fullName>
    </alternativeName>
</protein>
<comment type="function">
    <text evidence="1">Involved in the synthesis of autoinducer 2 (AI-2) which is secreted by bacteria and is used to communicate both the cell density and the metabolic potential of the environment. The regulation of gene expression in response to changes in cell density is called quorum sensing. Catalyzes the transformation of S-ribosylhomocysteine (RHC) to homocysteine (HC) and 4,5-dihydroxy-2,3-pentadione (DPD).</text>
</comment>
<comment type="catalytic activity">
    <reaction evidence="1">
        <text>S-(5-deoxy-D-ribos-5-yl)-L-homocysteine = (S)-4,5-dihydroxypentane-2,3-dione + L-homocysteine</text>
        <dbReference type="Rhea" id="RHEA:17753"/>
        <dbReference type="ChEBI" id="CHEBI:29484"/>
        <dbReference type="ChEBI" id="CHEBI:58195"/>
        <dbReference type="ChEBI" id="CHEBI:58199"/>
        <dbReference type="EC" id="4.4.1.21"/>
    </reaction>
</comment>
<comment type="cofactor">
    <cofactor evidence="1">
        <name>Fe cation</name>
        <dbReference type="ChEBI" id="CHEBI:24875"/>
    </cofactor>
    <text evidence="1">Binds 1 Fe cation per subunit.</text>
</comment>
<comment type="subunit">
    <text evidence="1">Homodimer.</text>
</comment>
<comment type="similarity">
    <text evidence="1">Belongs to the LuxS family.</text>
</comment>
<proteinExistence type="inferred from homology"/>
<reference key="1">
    <citation type="submission" date="2008-06" db="EMBL/GenBank/DDBJ databases">
        <title>Genome and proteome analysis of A. pleuropneumoniae serotype 7.</title>
        <authorList>
            <person name="Linke B."/>
            <person name="Buettner F."/>
            <person name="Martinez-Arias R."/>
            <person name="Goesmann A."/>
            <person name="Baltes N."/>
            <person name="Tegetmeyer H."/>
            <person name="Singh M."/>
            <person name="Gerlach G.F."/>
        </authorList>
    </citation>
    <scope>NUCLEOTIDE SEQUENCE [LARGE SCALE GENOMIC DNA]</scope>
    <source>
        <strain>AP76</strain>
    </source>
</reference>
<sequence>MPLLDSFKVDHTRMNAPAVRVAKTMTTPKGDTITVFDLRFCRPNIDILPVRGIHTMEHLFAGFMRDHLNSESVEIIDISPMGCRTGFYMSLIGAPSEADVVSAWTKSMEDALNKVPDVSKIPELNEYQCGSYKEHSLEEAHQIARDVLAKGIGVNRNEDLALDEKLLNP</sequence>
<accession>B3H1Y9</accession>
<organism>
    <name type="scientific">Actinobacillus pleuropneumoniae serotype 7 (strain AP76)</name>
    <dbReference type="NCBI Taxonomy" id="537457"/>
    <lineage>
        <taxon>Bacteria</taxon>
        <taxon>Pseudomonadati</taxon>
        <taxon>Pseudomonadota</taxon>
        <taxon>Gammaproteobacteria</taxon>
        <taxon>Pasteurellales</taxon>
        <taxon>Pasteurellaceae</taxon>
        <taxon>Actinobacillus</taxon>
    </lineage>
</organism>